<accession>Q8UCM5</accession>
<accession>Q7CX05</accession>
<dbReference type="EC" id="7.6.2.-" evidence="1"/>
<dbReference type="EMBL" id="AE007869">
    <property type="protein sequence ID" value="AAK88195.1"/>
    <property type="molecule type" value="Genomic_DNA"/>
</dbReference>
<dbReference type="PIR" id="AH2878">
    <property type="entry name" value="AH2878"/>
</dbReference>
<dbReference type="PIR" id="B97655">
    <property type="entry name" value="B97655"/>
</dbReference>
<dbReference type="RefSeq" id="NP_355410.1">
    <property type="nucleotide sequence ID" value="NC_003062.2"/>
</dbReference>
<dbReference type="RefSeq" id="WP_010972339.1">
    <property type="nucleotide sequence ID" value="NC_003062.2"/>
</dbReference>
<dbReference type="SMR" id="Q8UCM5"/>
<dbReference type="STRING" id="176299.Atu2458"/>
<dbReference type="EnsemblBacteria" id="AAK88195">
    <property type="protein sequence ID" value="AAK88195"/>
    <property type="gene ID" value="Atu2458"/>
</dbReference>
<dbReference type="GeneID" id="1134496"/>
<dbReference type="KEGG" id="atu:Atu2458"/>
<dbReference type="PATRIC" id="fig|176299.10.peg.2470"/>
<dbReference type="eggNOG" id="COG4559">
    <property type="taxonomic scope" value="Bacteria"/>
</dbReference>
<dbReference type="HOGENOM" id="CLU_000604_1_11_5"/>
<dbReference type="OrthoDB" id="9810077at2"/>
<dbReference type="PhylomeDB" id="Q8UCM5"/>
<dbReference type="BioCyc" id="AGRO:ATU2458-MONOMER"/>
<dbReference type="Proteomes" id="UP000000813">
    <property type="component" value="Chromosome circular"/>
</dbReference>
<dbReference type="GO" id="GO:0005886">
    <property type="term" value="C:plasma membrane"/>
    <property type="evidence" value="ECO:0007669"/>
    <property type="project" value="UniProtKB-SubCell"/>
</dbReference>
<dbReference type="GO" id="GO:0005524">
    <property type="term" value="F:ATP binding"/>
    <property type="evidence" value="ECO:0007669"/>
    <property type="project" value="UniProtKB-KW"/>
</dbReference>
<dbReference type="GO" id="GO:0016887">
    <property type="term" value="F:ATP hydrolysis activity"/>
    <property type="evidence" value="ECO:0007669"/>
    <property type="project" value="InterPro"/>
</dbReference>
<dbReference type="CDD" id="cd03214">
    <property type="entry name" value="ABC_Iron-Siderophores_B12_Hemin"/>
    <property type="match status" value="1"/>
</dbReference>
<dbReference type="Gene3D" id="3.40.50.300">
    <property type="entry name" value="P-loop containing nucleotide triphosphate hydrolases"/>
    <property type="match status" value="1"/>
</dbReference>
<dbReference type="InterPro" id="IPR003593">
    <property type="entry name" value="AAA+_ATPase"/>
</dbReference>
<dbReference type="InterPro" id="IPR003439">
    <property type="entry name" value="ABC_transporter-like_ATP-bd"/>
</dbReference>
<dbReference type="InterPro" id="IPR017871">
    <property type="entry name" value="ABC_transporter-like_CS"/>
</dbReference>
<dbReference type="InterPro" id="IPR027417">
    <property type="entry name" value="P-loop_NTPase"/>
</dbReference>
<dbReference type="NCBIfam" id="NF010068">
    <property type="entry name" value="PRK13548.1"/>
    <property type="match status" value="1"/>
</dbReference>
<dbReference type="PANTHER" id="PTHR42794">
    <property type="entry name" value="HEMIN IMPORT ATP-BINDING PROTEIN HMUV"/>
    <property type="match status" value="1"/>
</dbReference>
<dbReference type="PANTHER" id="PTHR42794:SF1">
    <property type="entry name" value="HEMIN IMPORT ATP-BINDING PROTEIN HMUV"/>
    <property type="match status" value="1"/>
</dbReference>
<dbReference type="Pfam" id="PF00005">
    <property type="entry name" value="ABC_tran"/>
    <property type="match status" value="1"/>
</dbReference>
<dbReference type="SMART" id="SM00382">
    <property type="entry name" value="AAA"/>
    <property type="match status" value="1"/>
</dbReference>
<dbReference type="SUPFAM" id="SSF52540">
    <property type="entry name" value="P-loop containing nucleoside triphosphate hydrolases"/>
    <property type="match status" value="1"/>
</dbReference>
<dbReference type="PROSITE" id="PS00211">
    <property type="entry name" value="ABC_TRANSPORTER_1"/>
    <property type="match status" value="1"/>
</dbReference>
<dbReference type="PROSITE" id="PS50893">
    <property type="entry name" value="ABC_TRANSPORTER_2"/>
    <property type="match status" value="1"/>
</dbReference>
<dbReference type="PROSITE" id="PS51261">
    <property type="entry name" value="HMUV"/>
    <property type="match status" value="1"/>
</dbReference>
<organism>
    <name type="scientific">Agrobacterium fabrum (strain C58 / ATCC 33970)</name>
    <name type="common">Agrobacterium tumefaciens (strain C58)</name>
    <dbReference type="NCBI Taxonomy" id="176299"/>
    <lineage>
        <taxon>Bacteria</taxon>
        <taxon>Pseudomonadati</taxon>
        <taxon>Pseudomonadota</taxon>
        <taxon>Alphaproteobacteria</taxon>
        <taxon>Hyphomicrobiales</taxon>
        <taxon>Rhizobiaceae</taxon>
        <taxon>Rhizobium/Agrobacterium group</taxon>
        <taxon>Agrobacterium</taxon>
        <taxon>Agrobacterium tumefaciens complex</taxon>
    </lineage>
</organism>
<reference key="1">
    <citation type="journal article" date="2001" name="Science">
        <title>The genome of the natural genetic engineer Agrobacterium tumefaciens C58.</title>
        <authorList>
            <person name="Wood D.W."/>
            <person name="Setubal J.C."/>
            <person name="Kaul R."/>
            <person name="Monks D.E."/>
            <person name="Kitajima J.P."/>
            <person name="Okura V.K."/>
            <person name="Zhou Y."/>
            <person name="Chen L."/>
            <person name="Wood G.E."/>
            <person name="Almeida N.F. Jr."/>
            <person name="Woo L."/>
            <person name="Chen Y."/>
            <person name="Paulsen I.T."/>
            <person name="Eisen J.A."/>
            <person name="Karp P.D."/>
            <person name="Bovee D. Sr."/>
            <person name="Chapman P."/>
            <person name="Clendenning J."/>
            <person name="Deatherage G."/>
            <person name="Gillet W."/>
            <person name="Grant C."/>
            <person name="Kutyavin T."/>
            <person name="Levy R."/>
            <person name="Li M.-J."/>
            <person name="McClelland E."/>
            <person name="Palmieri A."/>
            <person name="Raymond C."/>
            <person name="Rouse G."/>
            <person name="Saenphimmachak C."/>
            <person name="Wu Z."/>
            <person name="Romero P."/>
            <person name="Gordon D."/>
            <person name="Zhang S."/>
            <person name="Yoo H."/>
            <person name="Tao Y."/>
            <person name="Biddle P."/>
            <person name="Jung M."/>
            <person name="Krespan W."/>
            <person name="Perry M."/>
            <person name="Gordon-Kamm B."/>
            <person name="Liao L."/>
            <person name="Kim S."/>
            <person name="Hendrick C."/>
            <person name="Zhao Z.-Y."/>
            <person name="Dolan M."/>
            <person name="Chumley F."/>
            <person name="Tingey S.V."/>
            <person name="Tomb J.-F."/>
            <person name="Gordon M.P."/>
            <person name="Olson M.V."/>
            <person name="Nester E.W."/>
        </authorList>
    </citation>
    <scope>NUCLEOTIDE SEQUENCE [LARGE SCALE GENOMIC DNA]</scope>
    <source>
        <strain>C58 / ATCC 33970</strain>
    </source>
</reference>
<reference key="2">
    <citation type="journal article" date="2001" name="Science">
        <title>Genome sequence of the plant pathogen and biotechnology agent Agrobacterium tumefaciens C58.</title>
        <authorList>
            <person name="Goodner B."/>
            <person name="Hinkle G."/>
            <person name="Gattung S."/>
            <person name="Miller N."/>
            <person name="Blanchard M."/>
            <person name="Qurollo B."/>
            <person name="Goldman B.S."/>
            <person name="Cao Y."/>
            <person name="Askenazi M."/>
            <person name="Halling C."/>
            <person name="Mullin L."/>
            <person name="Houmiel K."/>
            <person name="Gordon J."/>
            <person name="Vaudin M."/>
            <person name="Iartchouk O."/>
            <person name="Epp A."/>
            <person name="Liu F."/>
            <person name="Wollam C."/>
            <person name="Allinger M."/>
            <person name="Doughty D."/>
            <person name="Scott C."/>
            <person name="Lappas C."/>
            <person name="Markelz B."/>
            <person name="Flanagan C."/>
            <person name="Crowell C."/>
            <person name="Gurson J."/>
            <person name="Lomo C."/>
            <person name="Sear C."/>
            <person name="Strub G."/>
            <person name="Cielo C."/>
            <person name="Slater S."/>
        </authorList>
    </citation>
    <scope>NUCLEOTIDE SEQUENCE [LARGE SCALE GENOMIC DNA]</scope>
    <source>
        <strain>C58 / ATCC 33970</strain>
    </source>
</reference>
<comment type="function">
    <text evidence="1">Part of the ABC transporter complex HmuTUV involved in hemin import. Responsible for energy coupling to the transport system.</text>
</comment>
<comment type="subunit">
    <text evidence="1">The complex is composed of two ATP-binding proteins (HmuV), two transmembrane proteins (HmuU) and a solute-binding protein (HmuT).</text>
</comment>
<comment type="subcellular location">
    <subcellularLocation>
        <location evidence="1">Cell inner membrane</location>
        <topology evidence="1">Peripheral membrane protein</topology>
    </subcellularLocation>
</comment>
<comment type="similarity">
    <text evidence="1">Belongs to the ABC transporter superfamily. Heme (hemin) importer (TC 3.A.1.14.5) family.</text>
</comment>
<keyword id="KW-0067">ATP-binding</keyword>
<keyword id="KW-0997">Cell inner membrane</keyword>
<keyword id="KW-1003">Cell membrane</keyword>
<keyword id="KW-0472">Membrane</keyword>
<keyword id="KW-0547">Nucleotide-binding</keyword>
<keyword id="KW-1185">Reference proteome</keyword>
<keyword id="KW-1278">Translocase</keyword>
<keyword id="KW-0813">Transport</keyword>
<name>HMUV_AGRFC</name>
<sequence>MIRAENITLIRTGRRLLDDVSVDLKPGKVNVIIGPNGAGKSTLMKVLSGEMRAEGGSVTYNNVALPQFTPVQLARMRAVLPQNTQLAFPFTALEIVRMGAVAQGSRAPEEQARRALARAGLRGFEQRSYNMLSGGEQQRVQFARALAQVPNSVENGEARALFLDEPTASLDIGHQISVLETARDFASGGGLVLAILHDLNLAAEFADQLIVMHGGRVTASGPSLDTISDETIARVYGIGGVVGRLPARHIPYVLPQSRHR</sequence>
<protein>
    <recommendedName>
        <fullName evidence="1">Hemin import ATP-binding protein HmuV</fullName>
        <ecNumber evidence="1">7.6.2.-</ecNumber>
    </recommendedName>
</protein>
<evidence type="ECO:0000255" key="1">
    <source>
        <dbReference type="HAMAP-Rule" id="MF_01718"/>
    </source>
</evidence>
<feature type="chain" id="PRO_0000269572" description="Hemin import ATP-binding protein HmuV">
    <location>
        <begin position="1"/>
        <end position="260"/>
    </location>
</feature>
<feature type="domain" description="ABC transporter" evidence="1">
    <location>
        <begin position="2"/>
        <end position="239"/>
    </location>
</feature>
<feature type="binding site" evidence="1">
    <location>
        <begin position="34"/>
        <end position="41"/>
    </location>
    <ligand>
        <name>ATP</name>
        <dbReference type="ChEBI" id="CHEBI:30616"/>
    </ligand>
</feature>
<proteinExistence type="inferred from homology"/>
<gene>
    <name evidence="1" type="primary">hmuV</name>
    <name type="ordered locus">Atu2458</name>
    <name type="ORF">AGR_C_4465</name>
</gene>